<comment type="function">
    <text evidence="1">Binds together with bS18 to 16S ribosomal RNA.</text>
</comment>
<comment type="similarity">
    <text evidence="1">Belongs to the bacterial ribosomal protein bS6 family.</text>
</comment>
<keyword id="KW-0687">Ribonucleoprotein</keyword>
<keyword id="KW-0689">Ribosomal protein</keyword>
<keyword id="KW-0694">RNA-binding</keyword>
<keyword id="KW-0699">rRNA-binding</keyword>
<feature type="chain" id="PRO_1000005271" description="Small ribosomal subunit protein bS6">
    <location>
        <begin position="1"/>
        <end position="125"/>
    </location>
</feature>
<feature type="region of interest" description="Disordered" evidence="2">
    <location>
        <begin position="100"/>
        <end position="125"/>
    </location>
</feature>
<feature type="compositionally biased region" description="Basic and acidic residues" evidence="2">
    <location>
        <begin position="104"/>
        <end position="113"/>
    </location>
</feature>
<feature type="compositionally biased region" description="Acidic residues" evidence="2">
    <location>
        <begin position="116"/>
        <end position="125"/>
    </location>
</feature>
<accession>Q0I4E5</accession>
<protein>
    <recommendedName>
        <fullName evidence="1">Small ribosomal subunit protein bS6</fullName>
    </recommendedName>
    <alternativeName>
        <fullName evidence="3">30S ribosomal protein S6</fullName>
    </alternativeName>
</protein>
<name>RS6_HISS1</name>
<evidence type="ECO:0000255" key="1">
    <source>
        <dbReference type="HAMAP-Rule" id="MF_00360"/>
    </source>
</evidence>
<evidence type="ECO:0000256" key="2">
    <source>
        <dbReference type="SAM" id="MobiDB-lite"/>
    </source>
</evidence>
<evidence type="ECO:0000305" key="3"/>
<proteinExistence type="inferred from homology"/>
<reference key="1">
    <citation type="journal article" date="2007" name="J. Bacteriol.">
        <title>Complete genome sequence of Haemophilus somnus (Histophilus somni) strain 129Pt and comparison to Haemophilus ducreyi 35000HP and Haemophilus influenzae Rd.</title>
        <authorList>
            <person name="Challacombe J.F."/>
            <person name="Duncan A.J."/>
            <person name="Brettin T.S."/>
            <person name="Bruce D."/>
            <person name="Chertkov O."/>
            <person name="Detter J.C."/>
            <person name="Han C.S."/>
            <person name="Misra M."/>
            <person name="Richardson P."/>
            <person name="Tapia R."/>
            <person name="Thayer N."/>
            <person name="Xie G."/>
            <person name="Inzana T.J."/>
        </authorList>
    </citation>
    <scope>NUCLEOTIDE SEQUENCE [LARGE SCALE GENOMIC DNA]</scope>
    <source>
        <strain>129Pt</strain>
    </source>
</reference>
<gene>
    <name evidence="1" type="primary">rpsF</name>
    <name type="ordered locus">HS_1438</name>
</gene>
<sequence>MRHYEIVFMVHPDQSEQVPGMIERYTSSIKEAGGQIHRLEDWGRRQLAYPINKLHKAHYVLMNVEAPQEVIDELETTFRYNDAVLRNVIIRTKHAVTEASPMVKAREERKPLTEVENNDFEDAEE</sequence>
<dbReference type="EMBL" id="CP000436">
    <property type="protein sequence ID" value="ABI25713.1"/>
    <property type="molecule type" value="Genomic_DNA"/>
</dbReference>
<dbReference type="SMR" id="Q0I4E5"/>
<dbReference type="KEGG" id="hso:HS_1438"/>
<dbReference type="eggNOG" id="COG0360">
    <property type="taxonomic scope" value="Bacteria"/>
</dbReference>
<dbReference type="HOGENOM" id="CLU_113441_6_1_6"/>
<dbReference type="GO" id="GO:0022627">
    <property type="term" value="C:cytosolic small ribosomal subunit"/>
    <property type="evidence" value="ECO:0007669"/>
    <property type="project" value="TreeGrafter"/>
</dbReference>
<dbReference type="GO" id="GO:0070181">
    <property type="term" value="F:small ribosomal subunit rRNA binding"/>
    <property type="evidence" value="ECO:0007669"/>
    <property type="project" value="TreeGrafter"/>
</dbReference>
<dbReference type="GO" id="GO:0003735">
    <property type="term" value="F:structural constituent of ribosome"/>
    <property type="evidence" value="ECO:0007669"/>
    <property type="project" value="InterPro"/>
</dbReference>
<dbReference type="GO" id="GO:0006412">
    <property type="term" value="P:translation"/>
    <property type="evidence" value="ECO:0007669"/>
    <property type="project" value="UniProtKB-UniRule"/>
</dbReference>
<dbReference type="CDD" id="cd00473">
    <property type="entry name" value="bS6"/>
    <property type="match status" value="1"/>
</dbReference>
<dbReference type="FunFam" id="3.30.70.60:FF:000003">
    <property type="entry name" value="30S ribosomal protein S6"/>
    <property type="match status" value="1"/>
</dbReference>
<dbReference type="Gene3D" id="3.30.70.60">
    <property type="match status" value="1"/>
</dbReference>
<dbReference type="HAMAP" id="MF_00360">
    <property type="entry name" value="Ribosomal_bS6"/>
    <property type="match status" value="1"/>
</dbReference>
<dbReference type="InterPro" id="IPR000529">
    <property type="entry name" value="Ribosomal_bS6"/>
</dbReference>
<dbReference type="InterPro" id="IPR020815">
    <property type="entry name" value="Ribosomal_bS6_CS"/>
</dbReference>
<dbReference type="InterPro" id="IPR035980">
    <property type="entry name" value="Ribosomal_bS6_sf"/>
</dbReference>
<dbReference type="InterPro" id="IPR020814">
    <property type="entry name" value="Ribosomal_S6_plastid/chlpt"/>
</dbReference>
<dbReference type="InterPro" id="IPR014717">
    <property type="entry name" value="Transl_elong_EF1B/ribsomal_bS6"/>
</dbReference>
<dbReference type="NCBIfam" id="TIGR00166">
    <property type="entry name" value="S6"/>
    <property type="match status" value="1"/>
</dbReference>
<dbReference type="PANTHER" id="PTHR21011">
    <property type="entry name" value="MITOCHONDRIAL 28S RIBOSOMAL PROTEIN S6"/>
    <property type="match status" value="1"/>
</dbReference>
<dbReference type="PANTHER" id="PTHR21011:SF1">
    <property type="entry name" value="SMALL RIBOSOMAL SUBUNIT PROTEIN BS6M"/>
    <property type="match status" value="1"/>
</dbReference>
<dbReference type="Pfam" id="PF01250">
    <property type="entry name" value="Ribosomal_S6"/>
    <property type="match status" value="1"/>
</dbReference>
<dbReference type="SUPFAM" id="SSF54995">
    <property type="entry name" value="Ribosomal protein S6"/>
    <property type="match status" value="1"/>
</dbReference>
<dbReference type="PROSITE" id="PS01048">
    <property type="entry name" value="RIBOSOMAL_S6"/>
    <property type="match status" value="1"/>
</dbReference>
<organism>
    <name type="scientific">Histophilus somni (strain 129Pt)</name>
    <name type="common">Haemophilus somnus</name>
    <dbReference type="NCBI Taxonomy" id="205914"/>
    <lineage>
        <taxon>Bacteria</taxon>
        <taxon>Pseudomonadati</taxon>
        <taxon>Pseudomonadota</taxon>
        <taxon>Gammaproteobacteria</taxon>
        <taxon>Pasteurellales</taxon>
        <taxon>Pasteurellaceae</taxon>
        <taxon>Histophilus</taxon>
    </lineage>
</organism>